<gene>
    <name type="ORF">SPBC543.02c</name>
</gene>
<reference key="1">
    <citation type="journal article" date="2002" name="Nature">
        <title>The genome sequence of Schizosaccharomyces pombe.</title>
        <authorList>
            <person name="Wood V."/>
            <person name="Gwilliam R."/>
            <person name="Rajandream M.A."/>
            <person name="Lyne M.H."/>
            <person name="Lyne R."/>
            <person name="Stewart A."/>
            <person name="Sgouros J.G."/>
            <person name="Peat N."/>
            <person name="Hayles J."/>
            <person name="Baker S.G."/>
            <person name="Basham D."/>
            <person name="Bowman S."/>
            <person name="Brooks K."/>
            <person name="Brown D."/>
            <person name="Brown S."/>
            <person name="Chillingworth T."/>
            <person name="Churcher C.M."/>
            <person name="Collins M."/>
            <person name="Connor R."/>
            <person name="Cronin A."/>
            <person name="Davis P."/>
            <person name="Feltwell T."/>
            <person name="Fraser A."/>
            <person name="Gentles S."/>
            <person name="Goble A."/>
            <person name="Hamlin N."/>
            <person name="Harris D.E."/>
            <person name="Hidalgo J."/>
            <person name="Hodgson G."/>
            <person name="Holroyd S."/>
            <person name="Hornsby T."/>
            <person name="Howarth S."/>
            <person name="Huckle E.J."/>
            <person name="Hunt S."/>
            <person name="Jagels K."/>
            <person name="James K.D."/>
            <person name="Jones L."/>
            <person name="Jones M."/>
            <person name="Leather S."/>
            <person name="McDonald S."/>
            <person name="McLean J."/>
            <person name="Mooney P."/>
            <person name="Moule S."/>
            <person name="Mungall K.L."/>
            <person name="Murphy L.D."/>
            <person name="Niblett D."/>
            <person name="Odell C."/>
            <person name="Oliver K."/>
            <person name="O'Neil S."/>
            <person name="Pearson D."/>
            <person name="Quail M.A."/>
            <person name="Rabbinowitsch E."/>
            <person name="Rutherford K.M."/>
            <person name="Rutter S."/>
            <person name="Saunders D."/>
            <person name="Seeger K."/>
            <person name="Sharp S."/>
            <person name="Skelton J."/>
            <person name="Simmonds M.N."/>
            <person name="Squares R."/>
            <person name="Squares S."/>
            <person name="Stevens K."/>
            <person name="Taylor K."/>
            <person name="Taylor R.G."/>
            <person name="Tivey A."/>
            <person name="Walsh S.V."/>
            <person name="Warren T."/>
            <person name="Whitehead S."/>
            <person name="Woodward J.R."/>
            <person name="Volckaert G."/>
            <person name="Aert R."/>
            <person name="Robben J."/>
            <person name="Grymonprez B."/>
            <person name="Weltjens I."/>
            <person name="Vanstreels E."/>
            <person name="Rieger M."/>
            <person name="Schaefer M."/>
            <person name="Mueller-Auer S."/>
            <person name="Gabel C."/>
            <person name="Fuchs M."/>
            <person name="Duesterhoeft A."/>
            <person name="Fritzc C."/>
            <person name="Holzer E."/>
            <person name="Moestl D."/>
            <person name="Hilbert H."/>
            <person name="Borzym K."/>
            <person name="Langer I."/>
            <person name="Beck A."/>
            <person name="Lehrach H."/>
            <person name="Reinhardt R."/>
            <person name="Pohl T.M."/>
            <person name="Eger P."/>
            <person name="Zimmermann W."/>
            <person name="Wedler H."/>
            <person name="Wambutt R."/>
            <person name="Purnelle B."/>
            <person name="Goffeau A."/>
            <person name="Cadieu E."/>
            <person name="Dreano S."/>
            <person name="Gloux S."/>
            <person name="Lelaure V."/>
            <person name="Mottier S."/>
            <person name="Galibert F."/>
            <person name="Aves S.J."/>
            <person name="Xiang Z."/>
            <person name="Hunt C."/>
            <person name="Moore K."/>
            <person name="Hurst S.M."/>
            <person name="Lucas M."/>
            <person name="Rochet M."/>
            <person name="Gaillardin C."/>
            <person name="Tallada V.A."/>
            <person name="Garzon A."/>
            <person name="Thode G."/>
            <person name="Daga R.R."/>
            <person name="Cruzado L."/>
            <person name="Jimenez J."/>
            <person name="Sanchez M."/>
            <person name="del Rey F."/>
            <person name="Benito J."/>
            <person name="Dominguez A."/>
            <person name="Revuelta J.L."/>
            <person name="Moreno S."/>
            <person name="Armstrong J."/>
            <person name="Forsburg S.L."/>
            <person name="Cerutti L."/>
            <person name="Lowe T."/>
            <person name="McCombie W.R."/>
            <person name="Paulsen I."/>
            <person name="Potashkin J."/>
            <person name="Shpakovski G.V."/>
            <person name="Ussery D."/>
            <person name="Barrell B.G."/>
            <person name="Nurse P."/>
        </authorList>
    </citation>
    <scope>NUCLEOTIDE SEQUENCE [LARGE SCALE GENOMIC DNA]</scope>
    <source>
        <strain>972 / ATCC 24843</strain>
    </source>
</reference>
<reference key="2">
    <citation type="journal article" date="2006" name="Nat. Biotechnol.">
        <title>ORFeome cloning and global analysis of protein localization in the fission yeast Schizosaccharomyces pombe.</title>
        <authorList>
            <person name="Matsuyama A."/>
            <person name="Arai R."/>
            <person name="Yashiroda Y."/>
            <person name="Shirai A."/>
            <person name="Kamata A."/>
            <person name="Sekido S."/>
            <person name="Kobayashi Y."/>
            <person name="Hashimoto A."/>
            <person name="Hamamoto M."/>
            <person name="Hiraoka Y."/>
            <person name="Horinouchi S."/>
            <person name="Yoshida M."/>
        </authorList>
    </citation>
    <scope>SUBCELLULAR LOCATION [LARGE SCALE ANALYSIS]</scope>
</reference>
<feature type="chain" id="PRO_0000363383" description="DnaJ homolog subfamily C member 7 homolog">
    <location>
        <begin position="1"/>
        <end position="476"/>
    </location>
</feature>
<feature type="repeat" description="TPR 1">
    <location>
        <begin position="23"/>
        <end position="56"/>
    </location>
</feature>
<feature type="repeat" description="TPR 2">
    <location>
        <begin position="59"/>
        <end position="92"/>
    </location>
</feature>
<feature type="repeat" description="TPR 3">
    <location>
        <begin position="143"/>
        <end position="176"/>
    </location>
</feature>
<feature type="repeat" description="TPR 4">
    <location>
        <begin position="177"/>
        <end position="210"/>
    </location>
</feature>
<feature type="repeat" description="TPR 5">
    <location>
        <begin position="223"/>
        <end position="256"/>
    </location>
</feature>
<feature type="repeat" description="TPR 6">
    <location>
        <begin position="261"/>
        <end position="294"/>
    </location>
</feature>
<feature type="repeat" description="TPR 7">
    <location>
        <begin position="295"/>
        <end position="328"/>
    </location>
</feature>
<feature type="domain" description="J" evidence="1">
    <location>
        <begin position="349"/>
        <end position="414"/>
    </location>
</feature>
<feature type="region of interest" description="Disordered" evidence="2">
    <location>
        <begin position="1"/>
        <end position="22"/>
    </location>
</feature>
<feature type="compositionally biased region" description="Polar residues" evidence="2">
    <location>
        <begin position="7"/>
        <end position="18"/>
    </location>
</feature>
<protein>
    <recommendedName>
        <fullName>DnaJ homolog subfamily C member 7 homolog</fullName>
    </recommendedName>
</protein>
<dbReference type="EMBL" id="CU329671">
    <property type="protein sequence ID" value="CAC05244.1"/>
    <property type="molecule type" value="Genomic_DNA"/>
</dbReference>
<dbReference type="RefSeq" id="NP_596790.1">
    <property type="nucleotide sequence ID" value="NM_001023810.2"/>
</dbReference>
<dbReference type="SMR" id="Q9HGM9"/>
<dbReference type="BioGRID" id="277581">
    <property type="interactions" value="9"/>
</dbReference>
<dbReference type="FunCoup" id="Q9HGM9">
    <property type="interactions" value="764"/>
</dbReference>
<dbReference type="STRING" id="284812.Q9HGM9"/>
<dbReference type="iPTMnet" id="Q9HGM9"/>
<dbReference type="PaxDb" id="4896-SPBC543.02c.1"/>
<dbReference type="EnsemblFungi" id="SPBC543.02c.1">
    <property type="protein sequence ID" value="SPBC543.02c.1:pep"/>
    <property type="gene ID" value="SPBC543.02c"/>
</dbReference>
<dbReference type="KEGG" id="spo:2541066"/>
<dbReference type="PomBase" id="SPBC543.02c"/>
<dbReference type="VEuPathDB" id="FungiDB:SPBC543.02c"/>
<dbReference type="eggNOG" id="KOG0550">
    <property type="taxonomic scope" value="Eukaryota"/>
</dbReference>
<dbReference type="HOGENOM" id="CLU_015935_3_1_1"/>
<dbReference type="InParanoid" id="Q9HGM9"/>
<dbReference type="OMA" id="KLYMNRA"/>
<dbReference type="PhylomeDB" id="Q9HGM9"/>
<dbReference type="PRO" id="PR:Q9HGM9"/>
<dbReference type="Proteomes" id="UP000002485">
    <property type="component" value="Chromosome II"/>
</dbReference>
<dbReference type="GO" id="GO:0005829">
    <property type="term" value="C:cytosol"/>
    <property type="evidence" value="ECO:0007005"/>
    <property type="project" value="PomBase"/>
</dbReference>
<dbReference type="GO" id="GO:0042026">
    <property type="term" value="P:protein refolding"/>
    <property type="evidence" value="ECO:0000250"/>
    <property type="project" value="PomBase"/>
</dbReference>
<dbReference type="CDD" id="cd06257">
    <property type="entry name" value="DnaJ"/>
    <property type="match status" value="1"/>
</dbReference>
<dbReference type="FunFam" id="1.25.40.10:FF:000673">
    <property type="entry name" value="TPR-repeat-containing chaperone protein DNAJ"/>
    <property type="match status" value="1"/>
</dbReference>
<dbReference type="Gene3D" id="1.10.287.110">
    <property type="entry name" value="DnaJ domain"/>
    <property type="match status" value="1"/>
</dbReference>
<dbReference type="Gene3D" id="1.25.40.10">
    <property type="entry name" value="Tetratricopeptide repeat domain"/>
    <property type="match status" value="3"/>
</dbReference>
<dbReference type="InterPro" id="IPR001623">
    <property type="entry name" value="DnaJ_domain"/>
</dbReference>
<dbReference type="InterPro" id="IPR036869">
    <property type="entry name" value="J_dom_sf"/>
</dbReference>
<dbReference type="InterPro" id="IPR011990">
    <property type="entry name" value="TPR-like_helical_dom_sf"/>
</dbReference>
<dbReference type="InterPro" id="IPR013105">
    <property type="entry name" value="TPR_2"/>
</dbReference>
<dbReference type="InterPro" id="IPR019734">
    <property type="entry name" value="TPR_rpt"/>
</dbReference>
<dbReference type="PANTHER" id="PTHR45188:SF2">
    <property type="entry name" value="DNAJ HOMOLOG SUBFAMILY C MEMBER 7"/>
    <property type="match status" value="1"/>
</dbReference>
<dbReference type="PANTHER" id="PTHR45188">
    <property type="entry name" value="DNAJ PROTEIN P58IPK HOMOLOG"/>
    <property type="match status" value="1"/>
</dbReference>
<dbReference type="Pfam" id="PF00226">
    <property type="entry name" value="DnaJ"/>
    <property type="match status" value="1"/>
</dbReference>
<dbReference type="Pfam" id="PF13414">
    <property type="entry name" value="TPR_11"/>
    <property type="match status" value="1"/>
</dbReference>
<dbReference type="Pfam" id="PF07719">
    <property type="entry name" value="TPR_2"/>
    <property type="match status" value="2"/>
</dbReference>
<dbReference type="Pfam" id="PF13181">
    <property type="entry name" value="TPR_8"/>
    <property type="match status" value="1"/>
</dbReference>
<dbReference type="PRINTS" id="PR00625">
    <property type="entry name" value="JDOMAIN"/>
</dbReference>
<dbReference type="SMART" id="SM00271">
    <property type="entry name" value="DnaJ"/>
    <property type="match status" value="1"/>
</dbReference>
<dbReference type="SMART" id="SM00028">
    <property type="entry name" value="TPR"/>
    <property type="match status" value="7"/>
</dbReference>
<dbReference type="SUPFAM" id="SSF46565">
    <property type="entry name" value="Chaperone J-domain"/>
    <property type="match status" value="1"/>
</dbReference>
<dbReference type="SUPFAM" id="SSF48452">
    <property type="entry name" value="TPR-like"/>
    <property type="match status" value="1"/>
</dbReference>
<dbReference type="PROSITE" id="PS50076">
    <property type="entry name" value="DNAJ_2"/>
    <property type="match status" value="1"/>
</dbReference>
<dbReference type="PROSITE" id="PS50005">
    <property type="entry name" value="TPR"/>
    <property type="match status" value="7"/>
</dbReference>
<dbReference type="PROSITE" id="PS50293">
    <property type="entry name" value="TPR_REGION"/>
    <property type="match status" value="1"/>
</dbReference>
<comment type="subcellular location">
    <subcellularLocation>
        <location evidence="3">Cytoplasm</location>
    </subcellularLocation>
</comment>
<name>DNJC7_SCHPO</name>
<evidence type="ECO:0000255" key="1">
    <source>
        <dbReference type="PROSITE-ProRule" id="PRU00286"/>
    </source>
</evidence>
<evidence type="ECO:0000256" key="2">
    <source>
        <dbReference type="SAM" id="MobiDB-lite"/>
    </source>
</evidence>
<evidence type="ECO:0000269" key="3">
    <source>
    </source>
</evidence>
<sequence length="476" mass="53305">MTEVETTHMNAGTESQQEPAELAEKQKAIGNAFYKEKKYAEAIKAYTEAIDLGSDSALAIYYSNRAATYMQIGEFELALCDAKQSDRIKPDVPKTQSRIRQAYEGLSILNEAEVYLKNKQAGLALNALDRLQRRIDSTTQPPMSWMYLKAQVYIFQNDMDRAQKIAHDVLRLNPKNVEALVLRGKVMYYSGENAKAITHFQEALKLDPDCTTAKTLFKQVRKLENTKNQGNDLFRQGNYQDAYEKYSEALQIDPDNKETVAKLYMNRATVLLRLKRPEEALSDSDNALAIDSSYLKGLKVRAKAHEALEKWEEAVRDVQSAIELDASDANLRQELRRLQLELKKSKRKDHYKILGVSKEATDIEIKKAYRKLALVYHPDKNAGNLEAEARFKEVGEAYTILSDPESRRRFDSGVDLEPGMEGGAGMDPFDILRAYQAGGSFPGGGFPGGGFPGGSYNSQGFGMGGGFPGFTSFQFS</sequence>
<organism>
    <name type="scientific">Schizosaccharomyces pombe (strain 972 / ATCC 24843)</name>
    <name type="common">Fission yeast</name>
    <dbReference type="NCBI Taxonomy" id="284812"/>
    <lineage>
        <taxon>Eukaryota</taxon>
        <taxon>Fungi</taxon>
        <taxon>Dikarya</taxon>
        <taxon>Ascomycota</taxon>
        <taxon>Taphrinomycotina</taxon>
        <taxon>Schizosaccharomycetes</taxon>
        <taxon>Schizosaccharomycetales</taxon>
        <taxon>Schizosaccharomycetaceae</taxon>
        <taxon>Schizosaccharomyces</taxon>
    </lineage>
</organism>
<keyword id="KW-0143">Chaperone</keyword>
<keyword id="KW-0963">Cytoplasm</keyword>
<keyword id="KW-1185">Reference proteome</keyword>
<keyword id="KW-0677">Repeat</keyword>
<keyword id="KW-0802">TPR repeat</keyword>
<proteinExistence type="predicted"/>
<accession>Q9HGM9</accession>